<evidence type="ECO:0000250" key="1"/>
<evidence type="ECO:0000255" key="2">
    <source>
        <dbReference type="HAMAP-Rule" id="MF_00492"/>
    </source>
</evidence>
<keyword id="KW-0963">Cytoplasm</keyword>
<keyword id="KW-0570">Pentose shunt</keyword>
<keyword id="KW-0704">Schiff base</keyword>
<keyword id="KW-0808">Transferase</keyword>
<proteinExistence type="inferred from homology"/>
<name>TAL_XANCB</name>
<comment type="function">
    <text evidence="2">Transaldolase is important for the balance of metabolites in the pentose-phosphate pathway.</text>
</comment>
<comment type="catalytic activity">
    <reaction evidence="2">
        <text>D-sedoheptulose 7-phosphate + D-glyceraldehyde 3-phosphate = D-erythrose 4-phosphate + beta-D-fructose 6-phosphate</text>
        <dbReference type="Rhea" id="RHEA:17053"/>
        <dbReference type="ChEBI" id="CHEBI:16897"/>
        <dbReference type="ChEBI" id="CHEBI:57483"/>
        <dbReference type="ChEBI" id="CHEBI:57634"/>
        <dbReference type="ChEBI" id="CHEBI:59776"/>
        <dbReference type="EC" id="2.2.1.2"/>
    </reaction>
</comment>
<comment type="pathway">
    <text evidence="2">Carbohydrate degradation; pentose phosphate pathway; D-glyceraldehyde 3-phosphate and beta-D-fructose 6-phosphate from D-ribose 5-phosphate and D-xylulose 5-phosphate (non-oxidative stage): step 2/3.</text>
</comment>
<comment type="subunit">
    <text evidence="1">Homodimer.</text>
</comment>
<comment type="subcellular location">
    <subcellularLocation>
        <location evidence="2">Cytoplasm</location>
    </subcellularLocation>
</comment>
<comment type="similarity">
    <text evidence="2">Belongs to the transaldolase family. Type 1 subfamily.</text>
</comment>
<organism>
    <name type="scientific">Xanthomonas campestris pv. campestris (strain B100)</name>
    <dbReference type="NCBI Taxonomy" id="509169"/>
    <lineage>
        <taxon>Bacteria</taxon>
        <taxon>Pseudomonadati</taxon>
        <taxon>Pseudomonadota</taxon>
        <taxon>Gammaproteobacteria</taxon>
        <taxon>Lysobacterales</taxon>
        <taxon>Lysobacteraceae</taxon>
        <taxon>Xanthomonas</taxon>
    </lineage>
</organism>
<dbReference type="EC" id="2.2.1.2" evidence="2"/>
<dbReference type="EMBL" id="AM920689">
    <property type="protein sequence ID" value="CAP52886.1"/>
    <property type="molecule type" value="Genomic_DNA"/>
</dbReference>
<dbReference type="SMR" id="B0RUE4"/>
<dbReference type="KEGG" id="xca:xcc-b100_3521"/>
<dbReference type="HOGENOM" id="CLU_047470_0_1_6"/>
<dbReference type="UniPathway" id="UPA00115">
    <property type="reaction ID" value="UER00414"/>
</dbReference>
<dbReference type="Proteomes" id="UP000001188">
    <property type="component" value="Chromosome"/>
</dbReference>
<dbReference type="GO" id="GO:0005829">
    <property type="term" value="C:cytosol"/>
    <property type="evidence" value="ECO:0007669"/>
    <property type="project" value="TreeGrafter"/>
</dbReference>
<dbReference type="GO" id="GO:0004801">
    <property type="term" value="F:transaldolase activity"/>
    <property type="evidence" value="ECO:0000250"/>
    <property type="project" value="UniProtKB"/>
</dbReference>
<dbReference type="GO" id="GO:0005975">
    <property type="term" value="P:carbohydrate metabolic process"/>
    <property type="evidence" value="ECO:0007669"/>
    <property type="project" value="InterPro"/>
</dbReference>
<dbReference type="GO" id="GO:0006098">
    <property type="term" value="P:pentose-phosphate shunt"/>
    <property type="evidence" value="ECO:0007669"/>
    <property type="project" value="UniProtKB-UniRule"/>
</dbReference>
<dbReference type="CDD" id="cd00957">
    <property type="entry name" value="Transaldolase_TalAB"/>
    <property type="match status" value="1"/>
</dbReference>
<dbReference type="Gene3D" id="3.20.20.70">
    <property type="entry name" value="Aldolase class I"/>
    <property type="match status" value="1"/>
</dbReference>
<dbReference type="HAMAP" id="MF_00492">
    <property type="entry name" value="Transaldolase_1"/>
    <property type="match status" value="1"/>
</dbReference>
<dbReference type="InterPro" id="IPR013785">
    <property type="entry name" value="Aldolase_TIM"/>
</dbReference>
<dbReference type="InterPro" id="IPR001585">
    <property type="entry name" value="TAL/FSA"/>
</dbReference>
<dbReference type="InterPro" id="IPR004730">
    <property type="entry name" value="Transaldolase_1"/>
</dbReference>
<dbReference type="InterPro" id="IPR018225">
    <property type="entry name" value="Transaldolase_AS"/>
</dbReference>
<dbReference type="PANTHER" id="PTHR10683">
    <property type="entry name" value="TRANSALDOLASE"/>
    <property type="match status" value="1"/>
</dbReference>
<dbReference type="PANTHER" id="PTHR10683:SF18">
    <property type="entry name" value="TRANSALDOLASE"/>
    <property type="match status" value="1"/>
</dbReference>
<dbReference type="Pfam" id="PF00923">
    <property type="entry name" value="TAL_FSA"/>
    <property type="match status" value="1"/>
</dbReference>
<dbReference type="SUPFAM" id="SSF51569">
    <property type="entry name" value="Aldolase"/>
    <property type="match status" value="1"/>
</dbReference>
<dbReference type="PROSITE" id="PS01054">
    <property type="entry name" value="TRANSALDOLASE_1"/>
    <property type="match status" value="1"/>
</dbReference>
<dbReference type="PROSITE" id="PS00958">
    <property type="entry name" value="TRANSALDOLASE_2"/>
    <property type="match status" value="1"/>
</dbReference>
<feature type="chain" id="PRO_1000126259" description="Transaldolase">
    <location>
        <begin position="1"/>
        <end position="322"/>
    </location>
</feature>
<feature type="active site" description="Schiff-base intermediate with substrate" evidence="2">
    <location>
        <position position="136"/>
    </location>
</feature>
<reference key="1">
    <citation type="journal article" date="2008" name="J. Biotechnol.">
        <title>The genome of Xanthomonas campestris pv. campestris B100 and its use for the reconstruction of metabolic pathways involved in xanthan biosynthesis.</title>
        <authorList>
            <person name="Vorhoelter F.-J."/>
            <person name="Schneiker S."/>
            <person name="Goesmann A."/>
            <person name="Krause L."/>
            <person name="Bekel T."/>
            <person name="Kaiser O."/>
            <person name="Linke B."/>
            <person name="Patschkowski T."/>
            <person name="Rueckert C."/>
            <person name="Schmid J."/>
            <person name="Sidhu V.K."/>
            <person name="Sieber V."/>
            <person name="Tauch A."/>
            <person name="Watt S.A."/>
            <person name="Weisshaar B."/>
            <person name="Becker A."/>
            <person name="Niehaus K."/>
            <person name="Puehler A."/>
        </authorList>
    </citation>
    <scope>NUCLEOTIDE SEQUENCE [LARGE SCALE GENOMIC DNA]</scope>
    <source>
        <strain>B100</strain>
    </source>
</reference>
<accession>B0RUE4</accession>
<protein>
    <recommendedName>
        <fullName evidence="2">Transaldolase</fullName>
        <ecNumber evidence="2">2.2.1.2</ecNumber>
    </recommendedName>
</protein>
<gene>
    <name evidence="2" type="primary">tal</name>
    <name type="ordered locus">xcc-b100_3521</name>
</gene>
<sequence>MTASPSKLAQLRDLSVVVADTGDYDAIKRLKPVDCTTNPTLVKKALDLPVYADLIERELAWGRAHGGEDRNSTINEVADRLTVGVGTMLSELVPGRVSTEVDADLAHDTQATIAKARKFIAMYAERGVSKDKILIKIAATWEGIEAARQLQQEGIDCNLTLIFNRSQALACAEAGVFLISPFVGRILDFFVAKGQTPASIDEDPGVVFVRGVYDEFKRRGSSTVVMGASFRSTAQIEALAGCDRLTISPDLLEKLDADHGDLPRKLSPLNADNAAITPINSDSFATDLAADDMATEKLASGIDTFAKDLEALRKTIADKLAG</sequence>